<proteinExistence type="inferred from homology"/>
<keyword id="KW-0067">ATP-binding</keyword>
<keyword id="KW-1003">Cell membrane</keyword>
<keyword id="KW-0406">Ion transport</keyword>
<keyword id="KW-0472">Membrane</keyword>
<keyword id="KW-0547">Nucleotide-binding</keyword>
<keyword id="KW-0630">Potassium</keyword>
<keyword id="KW-0633">Potassium transport</keyword>
<keyword id="KW-0812">Transmembrane</keyword>
<keyword id="KW-1133">Transmembrane helix</keyword>
<keyword id="KW-0813">Transport</keyword>
<evidence type="ECO:0000255" key="1">
    <source>
        <dbReference type="HAMAP-Rule" id="MF_00276"/>
    </source>
</evidence>
<protein>
    <recommendedName>
        <fullName evidence="1">Potassium-transporting ATPase KdpC subunit</fullName>
    </recommendedName>
    <alternativeName>
        <fullName evidence="1">ATP phosphohydrolase [potassium-transporting] C chain</fullName>
    </alternativeName>
    <alternativeName>
        <fullName evidence="1">Potassium-binding and translocating subunit C</fullName>
    </alternativeName>
    <alternativeName>
        <fullName evidence="1">Potassium-translocating ATPase C chain</fullName>
    </alternativeName>
</protein>
<feature type="chain" id="PRO_0000197000" description="Potassium-transporting ATPase KdpC subunit">
    <location>
        <begin position="1"/>
        <end position="211"/>
    </location>
</feature>
<feature type="transmembrane region" description="Helical" evidence="1">
    <location>
        <begin position="13"/>
        <end position="35"/>
    </location>
</feature>
<accession>Q93MV4</accession>
<reference key="1">
    <citation type="submission" date="2001-06" db="EMBL/GenBank/DDBJ databases">
        <title>The kdp system of Myxococcus xanthus.</title>
        <authorList>
            <person name="Treuner-Lange A.U."/>
            <person name="Zusman D.R."/>
        </authorList>
    </citation>
    <scope>NUCLEOTIDE SEQUENCE [GENOMIC DNA]</scope>
</reference>
<sequence>MFSTFLTALRTCVVTMVLTGLLYPLAVTGLAQLLFPGEANGSWVKDGRGRVVGSALIGQGFTRAGYFHPRPSAAGAGYDGAASSGSNLGPTSLKLKERAAAELERLRRENPDAAGPVPAELVTTSASGLDPHLSPETARWQAARVARARGVALERVLDVVDARVEGRTFGVLGEPRVNVLLLNLALDRRFGPLPDAAPGVGGRASPGQGAP</sequence>
<organism>
    <name type="scientific">Myxococcus xanthus</name>
    <dbReference type="NCBI Taxonomy" id="34"/>
    <lineage>
        <taxon>Bacteria</taxon>
        <taxon>Pseudomonadati</taxon>
        <taxon>Myxococcota</taxon>
        <taxon>Myxococcia</taxon>
        <taxon>Myxococcales</taxon>
        <taxon>Cystobacterineae</taxon>
        <taxon>Myxococcaceae</taxon>
        <taxon>Myxococcus</taxon>
    </lineage>
</organism>
<dbReference type="EMBL" id="AF395108">
    <property type="protein sequence ID" value="AAK81845.1"/>
    <property type="molecule type" value="Genomic_DNA"/>
</dbReference>
<dbReference type="SMR" id="Q93MV4"/>
<dbReference type="GO" id="GO:0005886">
    <property type="term" value="C:plasma membrane"/>
    <property type="evidence" value="ECO:0007669"/>
    <property type="project" value="UniProtKB-SubCell"/>
</dbReference>
<dbReference type="GO" id="GO:0005524">
    <property type="term" value="F:ATP binding"/>
    <property type="evidence" value="ECO:0007669"/>
    <property type="project" value="UniProtKB-UniRule"/>
</dbReference>
<dbReference type="GO" id="GO:0008556">
    <property type="term" value="F:P-type potassium transmembrane transporter activity"/>
    <property type="evidence" value="ECO:0007669"/>
    <property type="project" value="InterPro"/>
</dbReference>
<dbReference type="HAMAP" id="MF_00276">
    <property type="entry name" value="KdpC"/>
    <property type="match status" value="1"/>
</dbReference>
<dbReference type="InterPro" id="IPR003820">
    <property type="entry name" value="KdpC"/>
</dbReference>
<dbReference type="NCBIfam" id="TIGR00681">
    <property type="entry name" value="kdpC"/>
    <property type="match status" value="1"/>
</dbReference>
<dbReference type="NCBIfam" id="NF001454">
    <property type="entry name" value="PRK00315.1"/>
    <property type="match status" value="1"/>
</dbReference>
<dbReference type="PANTHER" id="PTHR30042">
    <property type="entry name" value="POTASSIUM-TRANSPORTING ATPASE C CHAIN"/>
    <property type="match status" value="1"/>
</dbReference>
<dbReference type="PANTHER" id="PTHR30042:SF2">
    <property type="entry name" value="POTASSIUM-TRANSPORTING ATPASE KDPC SUBUNIT"/>
    <property type="match status" value="1"/>
</dbReference>
<dbReference type="Pfam" id="PF02669">
    <property type="entry name" value="KdpC"/>
    <property type="match status" value="1"/>
</dbReference>
<dbReference type="PIRSF" id="PIRSF001296">
    <property type="entry name" value="K_ATPase_KdpC"/>
    <property type="match status" value="1"/>
</dbReference>
<gene>
    <name evidence="1" type="primary">kdpC</name>
</gene>
<comment type="function">
    <text evidence="1">Part of the high-affinity ATP-driven potassium transport (or Kdp) system, which catalyzes the hydrolysis of ATP coupled with the electrogenic transport of potassium into the cytoplasm. This subunit acts as a catalytic chaperone that increases the ATP-binding affinity of the ATP-hydrolyzing subunit KdpB by the formation of a transient KdpB/KdpC/ATP ternary complex.</text>
</comment>
<comment type="subunit">
    <text evidence="1">The system is composed of three essential subunits: KdpA, KdpB and KdpC.</text>
</comment>
<comment type="subcellular location">
    <subcellularLocation>
        <location evidence="1">Cell membrane</location>
        <topology evidence="1">Single-pass membrane protein</topology>
    </subcellularLocation>
</comment>
<comment type="similarity">
    <text evidence="1">Belongs to the KdpC family.</text>
</comment>
<name>KDPC_MYXXA</name>